<gene>
    <name evidence="1" type="primary">erpA</name>
    <name type="ordered locus">PSHAa2251</name>
</gene>
<name>ERPA_PSET1</name>
<reference key="1">
    <citation type="journal article" date="2005" name="Genome Res.">
        <title>Coping with cold: the genome of the versatile marine Antarctica bacterium Pseudoalteromonas haloplanktis TAC125.</title>
        <authorList>
            <person name="Medigue C."/>
            <person name="Krin E."/>
            <person name="Pascal G."/>
            <person name="Barbe V."/>
            <person name="Bernsel A."/>
            <person name="Bertin P.N."/>
            <person name="Cheung F."/>
            <person name="Cruveiller S."/>
            <person name="D'Amico S."/>
            <person name="Duilio A."/>
            <person name="Fang G."/>
            <person name="Feller G."/>
            <person name="Ho C."/>
            <person name="Mangenot S."/>
            <person name="Marino G."/>
            <person name="Nilsson J."/>
            <person name="Parrilli E."/>
            <person name="Rocha E.P.C."/>
            <person name="Rouy Z."/>
            <person name="Sekowska A."/>
            <person name="Tutino M.L."/>
            <person name="Vallenet D."/>
            <person name="von Heijne G."/>
            <person name="Danchin A."/>
        </authorList>
    </citation>
    <scope>NUCLEOTIDE SEQUENCE [LARGE SCALE GENOMIC DNA]</scope>
    <source>
        <strain>TAC 125</strain>
    </source>
</reference>
<comment type="function">
    <text evidence="1">Required for insertion of 4Fe-4S clusters for at least IspG.</text>
</comment>
<comment type="cofactor">
    <cofactor evidence="1">
        <name>iron-sulfur cluster</name>
        <dbReference type="ChEBI" id="CHEBI:30408"/>
    </cofactor>
    <text evidence="1">Binds 1 iron-sulfur cluster per subunit.</text>
</comment>
<comment type="subunit">
    <text evidence="1">Homodimer.</text>
</comment>
<comment type="similarity">
    <text evidence="1">Belongs to the HesB/IscA family.</text>
</comment>
<evidence type="ECO:0000255" key="1">
    <source>
        <dbReference type="HAMAP-Rule" id="MF_01380"/>
    </source>
</evidence>
<proteinExistence type="inferred from homology"/>
<protein>
    <recommendedName>
        <fullName evidence="1">Iron-sulfur cluster insertion protein ErpA</fullName>
    </recommendedName>
</protein>
<feature type="chain" id="PRO_0000311522" description="Iron-sulfur cluster insertion protein ErpA">
    <location>
        <begin position="1"/>
        <end position="112"/>
    </location>
</feature>
<feature type="binding site" evidence="1">
    <location>
        <position position="40"/>
    </location>
    <ligand>
        <name>iron-sulfur cluster</name>
        <dbReference type="ChEBI" id="CHEBI:30408"/>
    </ligand>
</feature>
<feature type="binding site" evidence="1">
    <location>
        <position position="104"/>
    </location>
    <ligand>
        <name>iron-sulfur cluster</name>
        <dbReference type="ChEBI" id="CHEBI:30408"/>
    </ligand>
</feature>
<feature type="binding site" evidence="1">
    <location>
        <position position="106"/>
    </location>
    <ligand>
        <name>iron-sulfur cluster</name>
        <dbReference type="ChEBI" id="CHEBI:30408"/>
    </ligand>
</feature>
<dbReference type="EMBL" id="CR954246">
    <property type="protein sequence ID" value="CAI87307.1"/>
    <property type="molecule type" value="Genomic_DNA"/>
</dbReference>
<dbReference type="SMR" id="Q3IHQ0"/>
<dbReference type="STRING" id="326442.PSHAa2251"/>
<dbReference type="KEGG" id="pha:PSHAa2251"/>
<dbReference type="eggNOG" id="COG0316">
    <property type="taxonomic scope" value="Bacteria"/>
</dbReference>
<dbReference type="HOGENOM" id="CLU_069054_5_3_6"/>
<dbReference type="BioCyc" id="PHAL326442:PSHA_RS11105-MONOMER"/>
<dbReference type="Proteomes" id="UP000006843">
    <property type="component" value="Chromosome I"/>
</dbReference>
<dbReference type="GO" id="GO:0005829">
    <property type="term" value="C:cytosol"/>
    <property type="evidence" value="ECO:0007669"/>
    <property type="project" value="TreeGrafter"/>
</dbReference>
<dbReference type="GO" id="GO:0051537">
    <property type="term" value="F:2 iron, 2 sulfur cluster binding"/>
    <property type="evidence" value="ECO:0007669"/>
    <property type="project" value="UniProtKB-ARBA"/>
</dbReference>
<dbReference type="GO" id="GO:0051539">
    <property type="term" value="F:4 iron, 4 sulfur cluster binding"/>
    <property type="evidence" value="ECO:0007669"/>
    <property type="project" value="TreeGrafter"/>
</dbReference>
<dbReference type="GO" id="GO:0005506">
    <property type="term" value="F:iron ion binding"/>
    <property type="evidence" value="ECO:0007669"/>
    <property type="project" value="UniProtKB-UniRule"/>
</dbReference>
<dbReference type="GO" id="GO:0016226">
    <property type="term" value="P:iron-sulfur cluster assembly"/>
    <property type="evidence" value="ECO:0007669"/>
    <property type="project" value="UniProtKB-UniRule"/>
</dbReference>
<dbReference type="FunFam" id="2.60.300.12:FF:000002">
    <property type="entry name" value="Iron-sulfur cluster insertion protein ErpA"/>
    <property type="match status" value="1"/>
</dbReference>
<dbReference type="Gene3D" id="2.60.300.12">
    <property type="entry name" value="HesB-like domain"/>
    <property type="match status" value="1"/>
</dbReference>
<dbReference type="HAMAP" id="MF_01380">
    <property type="entry name" value="Fe_S_insert_ErpA"/>
    <property type="match status" value="1"/>
</dbReference>
<dbReference type="InterPro" id="IPR000361">
    <property type="entry name" value="FeS_biogenesis"/>
</dbReference>
<dbReference type="InterPro" id="IPR016092">
    <property type="entry name" value="FeS_cluster_insertion"/>
</dbReference>
<dbReference type="InterPro" id="IPR023063">
    <property type="entry name" value="FeS_cluster_insertion_RrpA"/>
</dbReference>
<dbReference type="InterPro" id="IPR035903">
    <property type="entry name" value="HesB-like_dom_sf"/>
</dbReference>
<dbReference type="NCBIfam" id="TIGR00049">
    <property type="entry name" value="iron-sulfur cluster assembly accessory protein"/>
    <property type="match status" value="1"/>
</dbReference>
<dbReference type="NCBIfam" id="NF010147">
    <property type="entry name" value="PRK13623.1"/>
    <property type="match status" value="1"/>
</dbReference>
<dbReference type="PANTHER" id="PTHR43011">
    <property type="entry name" value="IRON-SULFUR CLUSTER ASSEMBLY 2 HOMOLOG, MITOCHONDRIAL"/>
    <property type="match status" value="1"/>
</dbReference>
<dbReference type="PANTHER" id="PTHR43011:SF1">
    <property type="entry name" value="IRON-SULFUR CLUSTER ASSEMBLY 2 HOMOLOG, MITOCHONDRIAL"/>
    <property type="match status" value="1"/>
</dbReference>
<dbReference type="Pfam" id="PF01521">
    <property type="entry name" value="Fe-S_biosyn"/>
    <property type="match status" value="1"/>
</dbReference>
<dbReference type="SUPFAM" id="SSF89360">
    <property type="entry name" value="HesB-like domain"/>
    <property type="match status" value="1"/>
</dbReference>
<organism>
    <name type="scientific">Pseudoalteromonas translucida (strain TAC 125)</name>
    <dbReference type="NCBI Taxonomy" id="326442"/>
    <lineage>
        <taxon>Bacteria</taxon>
        <taxon>Pseudomonadati</taxon>
        <taxon>Pseudomonadota</taxon>
        <taxon>Gammaproteobacteria</taxon>
        <taxon>Alteromonadales</taxon>
        <taxon>Pseudoalteromonadaceae</taxon>
        <taxon>Pseudoalteromonas</taxon>
    </lineage>
</organism>
<accession>Q3IHQ0</accession>
<keyword id="KW-0408">Iron</keyword>
<keyword id="KW-0411">Iron-sulfur</keyword>
<keyword id="KW-0479">Metal-binding</keyword>
<keyword id="KW-1185">Reference proteome</keyword>
<sequence>MSEELPIKFTDAAADRVKQLIDEEENPELKLRVYVTGGGCSGFQYGFTFDEKANPGDLEIVKNGVMLVVDPMSLQYLVDGEVDYTEGLEGARFFVTNPHATTTCGCGSSFTI</sequence>